<feature type="chain" id="PRO_1000071363" description="Elongation factor Tu">
    <location>
        <begin position="1"/>
        <end position="394"/>
    </location>
</feature>
<feature type="domain" description="tr-type G">
    <location>
        <begin position="10"/>
        <end position="204"/>
    </location>
</feature>
<feature type="region of interest" description="G1" evidence="1">
    <location>
        <begin position="19"/>
        <end position="26"/>
    </location>
</feature>
<feature type="region of interest" description="G2" evidence="1">
    <location>
        <begin position="60"/>
        <end position="64"/>
    </location>
</feature>
<feature type="region of interest" description="G3" evidence="1">
    <location>
        <begin position="81"/>
        <end position="84"/>
    </location>
</feature>
<feature type="region of interest" description="G4" evidence="1">
    <location>
        <begin position="136"/>
        <end position="139"/>
    </location>
</feature>
<feature type="region of interest" description="G5" evidence="1">
    <location>
        <begin position="174"/>
        <end position="176"/>
    </location>
</feature>
<feature type="binding site" evidence="2">
    <location>
        <begin position="19"/>
        <end position="26"/>
    </location>
    <ligand>
        <name>GTP</name>
        <dbReference type="ChEBI" id="CHEBI:37565"/>
    </ligand>
</feature>
<feature type="binding site" evidence="2">
    <location>
        <position position="26"/>
    </location>
    <ligand>
        <name>Mg(2+)</name>
        <dbReference type="ChEBI" id="CHEBI:18420"/>
    </ligand>
</feature>
<feature type="binding site" evidence="2">
    <location>
        <begin position="81"/>
        <end position="85"/>
    </location>
    <ligand>
        <name>GTP</name>
        <dbReference type="ChEBI" id="CHEBI:37565"/>
    </ligand>
</feature>
<feature type="binding site" evidence="2">
    <location>
        <begin position="136"/>
        <end position="139"/>
    </location>
    <ligand>
        <name>GTP</name>
        <dbReference type="ChEBI" id="CHEBI:37565"/>
    </ligand>
</feature>
<protein>
    <recommendedName>
        <fullName evidence="2">Elongation factor Tu</fullName>
        <shortName evidence="2">EF-Tu</shortName>
        <ecNumber evidence="2">3.6.5.3</ecNumber>
    </recommendedName>
</protein>
<reference key="1">
    <citation type="journal article" date="2008" name="J. Bacteriol.">
        <title>Genome sequence of Staphylococcus aureus strain Newman and comparative analysis of staphylococcal genomes: polymorphism and evolution of two major pathogenicity islands.</title>
        <authorList>
            <person name="Baba T."/>
            <person name="Bae T."/>
            <person name="Schneewind O."/>
            <person name="Takeuchi F."/>
            <person name="Hiramatsu K."/>
        </authorList>
    </citation>
    <scope>NUCLEOTIDE SEQUENCE [LARGE SCALE GENOMIC DNA]</scope>
    <source>
        <strain>Newman</strain>
    </source>
</reference>
<comment type="function">
    <text evidence="2">GTP hydrolase that promotes the GTP-dependent binding of aminoacyl-tRNA to the A-site of ribosomes during protein biosynthesis.</text>
</comment>
<comment type="catalytic activity">
    <reaction evidence="2">
        <text>GTP + H2O = GDP + phosphate + H(+)</text>
        <dbReference type="Rhea" id="RHEA:19669"/>
        <dbReference type="ChEBI" id="CHEBI:15377"/>
        <dbReference type="ChEBI" id="CHEBI:15378"/>
        <dbReference type="ChEBI" id="CHEBI:37565"/>
        <dbReference type="ChEBI" id="CHEBI:43474"/>
        <dbReference type="ChEBI" id="CHEBI:58189"/>
        <dbReference type="EC" id="3.6.5.3"/>
    </reaction>
    <physiologicalReaction direction="left-to-right" evidence="2">
        <dbReference type="Rhea" id="RHEA:19670"/>
    </physiologicalReaction>
</comment>
<comment type="subunit">
    <text evidence="2">Monomer.</text>
</comment>
<comment type="subcellular location">
    <subcellularLocation>
        <location evidence="2">Cytoplasm</location>
    </subcellularLocation>
</comment>
<comment type="similarity">
    <text evidence="2">Belongs to the TRAFAC class translation factor GTPase superfamily. Classic translation factor GTPase family. EF-Tu/EF-1A subfamily.</text>
</comment>
<dbReference type="EC" id="3.6.5.3" evidence="2"/>
<dbReference type="EMBL" id="AP009351">
    <property type="protein sequence ID" value="BAF66782.1"/>
    <property type="molecule type" value="Genomic_DNA"/>
</dbReference>
<dbReference type="RefSeq" id="WP_001040568.1">
    <property type="nucleotide sequence ID" value="NZ_JBBIAE010000002.1"/>
</dbReference>
<dbReference type="SMR" id="A6QEK0"/>
<dbReference type="KEGG" id="sae:NWMN_0510"/>
<dbReference type="HOGENOM" id="CLU_007265_0_0_9"/>
<dbReference type="Proteomes" id="UP000006386">
    <property type="component" value="Chromosome"/>
</dbReference>
<dbReference type="GO" id="GO:0005829">
    <property type="term" value="C:cytosol"/>
    <property type="evidence" value="ECO:0007669"/>
    <property type="project" value="TreeGrafter"/>
</dbReference>
<dbReference type="GO" id="GO:0005525">
    <property type="term" value="F:GTP binding"/>
    <property type="evidence" value="ECO:0007669"/>
    <property type="project" value="UniProtKB-UniRule"/>
</dbReference>
<dbReference type="GO" id="GO:0003924">
    <property type="term" value="F:GTPase activity"/>
    <property type="evidence" value="ECO:0007669"/>
    <property type="project" value="InterPro"/>
</dbReference>
<dbReference type="GO" id="GO:0003746">
    <property type="term" value="F:translation elongation factor activity"/>
    <property type="evidence" value="ECO:0007669"/>
    <property type="project" value="UniProtKB-UniRule"/>
</dbReference>
<dbReference type="CDD" id="cd01884">
    <property type="entry name" value="EF_Tu"/>
    <property type="match status" value="1"/>
</dbReference>
<dbReference type="CDD" id="cd03697">
    <property type="entry name" value="EFTU_II"/>
    <property type="match status" value="1"/>
</dbReference>
<dbReference type="CDD" id="cd03707">
    <property type="entry name" value="EFTU_III"/>
    <property type="match status" value="1"/>
</dbReference>
<dbReference type="FunFam" id="2.40.30.10:FF:000001">
    <property type="entry name" value="Elongation factor Tu"/>
    <property type="match status" value="1"/>
</dbReference>
<dbReference type="FunFam" id="3.40.50.300:FF:000003">
    <property type="entry name" value="Elongation factor Tu"/>
    <property type="match status" value="1"/>
</dbReference>
<dbReference type="Gene3D" id="3.40.50.300">
    <property type="entry name" value="P-loop containing nucleotide triphosphate hydrolases"/>
    <property type="match status" value="1"/>
</dbReference>
<dbReference type="Gene3D" id="2.40.30.10">
    <property type="entry name" value="Translation factors"/>
    <property type="match status" value="2"/>
</dbReference>
<dbReference type="HAMAP" id="MF_00118_B">
    <property type="entry name" value="EF_Tu_B"/>
    <property type="match status" value="1"/>
</dbReference>
<dbReference type="InterPro" id="IPR041709">
    <property type="entry name" value="EF-Tu_GTP-bd"/>
</dbReference>
<dbReference type="InterPro" id="IPR050055">
    <property type="entry name" value="EF-Tu_GTPase"/>
</dbReference>
<dbReference type="InterPro" id="IPR004161">
    <property type="entry name" value="EFTu-like_2"/>
</dbReference>
<dbReference type="InterPro" id="IPR033720">
    <property type="entry name" value="EFTU_2"/>
</dbReference>
<dbReference type="InterPro" id="IPR031157">
    <property type="entry name" value="G_TR_CS"/>
</dbReference>
<dbReference type="InterPro" id="IPR027417">
    <property type="entry name" value="P-loop_NTPase"/>
</dbReference>
<dbReference type="InterPro" id="IPR005225">
    <property type="entry name" value="Small_GTP-bd"/>
</dbReference>
<dbReference type="InterPro" id="IPR000795">
    <property type="entry name" value="T_Tr_GTP-bd_dom"/>
</dbReference>
<dbReference type="InterPro" id="IPR009000">
    <property type="entry name" value="Transl_B-barrel_sf"/>
</dbReference>
<dbReference type="InterPro" id="IPR009001">
    <property type="entry name" value="Transl_elong_EF1A/Init_IF2_C"/>
</dbReference>
<dbReference type="InterPro" id="IPR004541">
    <property type="entry name" value="Transl_elong_EFTu/EF1A_bac/org"/>
</dbReference>
<dbReference type="InterPro" id="IPR004160">
    <property type="entry name" value="Transl_elong_EFTu/EF1A_C"/>
</dbReference>
<dbReference type="NCBIfam" id="TIGR00485">
    <property type="entry name" value="EF-Tu"/>
    <property type="match status" value="1"/>
</dbReference>
<dbReference type="NCBIfam" id="NF000766">
    <property type="entry name" value="PRK00049.1"/>
    <property type="match status" value="1"/>
</dbReference>
<dbReference type="NCBIfam" id="NF009372">
    <property type="entry name" value="PRK12735.1"/>
    <property type="match status" value="1"/>
</dbReference>
<dbReference type="NCBIfam" id="NF009373">
    <property type="entry name" value="PRK12736.1"/>
    <property type="match status" value="1"/>
</dbReference>
<dbReference type="NCBIfam" id="TIGR00231">
    <property type="entry name" value="small_GTP"/>
    <property type="match status" value="1"/>
</dbReference>
<dbReference type="PANTHER" id="PTHR43721:SF22">
    <property type="entry name" value="ELONGATION FACTOR TU, MITOCHONDRIAL"/>
    <property type="match status" value="1"/>
</dbReference>
<dbReference type="PANTHER" id="PTHR43721">
    <property type="entry name" value="ELONGATION FACTOR TU-RELATED"/>
    <property type="match status" value="1"/>
</dbReference>
<dbReference type="Pfam" id="PF00009">
    <property type="entry name" value="GTP_EFTU"/>
    <property type="match status" value="1"/>
</dbReference>
<dbReference type="Pfam" id="PF03144">
    <property type="entry name" value="GTP_EFTU_D2"/>
    <property type="match status" value="1"/>
</dbReference>
<dbReference type="Pfam" id="PF03143">
    <property type="entry name" value="GTP_EFTU_D3"/>
    <property type="match status" value="1"/>
</dbReference>
<dbReference type="PRINTS" id="PR00315">
    <property type="entry name" value="ELONGATNFCT"/>
</dbReference>
<dbReference type="SUPFAM" id="SSF50465">
    <property type="entry name" value="EF-Tu/eEF-1alpha/eIF2-gamma C-terminal domain"/>
    <property type="match status" value="1"/>
</dbReference>
<dbReference type="SUPFAM" id="SSF52540">
    <property type="entry name" value="P-loop containing nucleoside triphosphate hydrolases"/>
    <property type="match status" value="1"/>
</dbReference>
<dbReference type="SUPFAM" id="SSF50447">
    <property type="entry name" value="Translation proteins"/>
    <property type="match status" value="1"/>
</dbReference>
<dbReference type="PROSITE" id="PS00301">
    <property type="entry name" value="G_TR_1"/>
    <property type="match status" value="1"/>
</dbReference>
<dbReference type="PROSITE" id="PS51722">
    <property type="entry name" value="G_TR_2"/>
    <property type="match status" value="1"/>
</dbReference>
<accession>A6QEK0</accession>
<keyword id="KW-0963">Cytoplasm</keyword>
<keyword id="KW-0251">Elongation factor</keyword>
<keyword id="KW-0342">GTP-binding</keyword>
<keyword id="KW-0378">Hydrolase</keyword>
<keyword id="KW-0460">Magnesium</keyword>
<keyword id="KW-0479">Metal-binding</keyword>
<keyword id="KW-0547">Nucleotide-binding</keyword>
<keyword id="KW-0648">Protein biosynthesis</keyword>
<organism>
    <name type="scientific">Staphylococcus aureus (strain Newman)</name>
    <dbReference type="NCBI Taxonomy" id="426430"/>
    <lineage>
        <taxon>Bacteria</taxon>
        <taxon>Bacillati</taxon>
        <taxon>Bacillota</taxon>
        <taxon>Bacilli</taxon>
        <taxon>Bacillales</taxon>
        <taxon>Staphylococcaceae</taxon>
        <taxon>Staphylococcus</taxon>
    </lineage>
</organism>
<evidence type="ECO:0000250" key="1"/>
<evidence type="ECO:0000255" key="2">
    <source>
        <dbReference type="HAMAP-Rule" id="MF_00118"/>
    </source>
</evidence>
<sequence length="394" mass="43104">MAKEKFDRSKEHANIGTIGHVDHGKTTLTAAIATVLAKNGDSVAQSYDMIDNAPEEKERGITINTSHIEYQTDKRHYAHVDCPGHADYVKNMITGAAQMDGGILVVSAADGPMPQTREHILLSRNVGVPALVVFLNKVDMVDDEELLELVEMEVRDLLSEYDFPGDDVPVIAGSALKALEGDAQYEEKILELMEAVDTYIPTPERDSDKPFMMPVEDVFSITGRGTVATGRVERGQIKVGEEVEIIGLHDTSKTTVTGVEMFRKLLDYAEAGDNIGALLRGVAREDVQRGQVLAAPGSITPHTEFKAEVYVLSKDEGGRHTPFFSNYRPQFYFRTTDVTGVVHLPEGTEMVMPGDNVEMTVELIAPIAIEDGTRFSIREGGRTVGSGVVTEIIK</sequence>
<name>EFTU_STAAE</name>
<gene>
    <name evidence="2" type="primary">tuf</name>
    <name type="ordered locus">NWMN_0510</name>
</gene>
<proteinExistence type="inferred from homology"/>